<comment type="function">
    <text evidence="1">Forms part of the ribosomal stalk which helps the ribosome interact with GTP-bound translation factors. Is thus essential for accurate translation.</text>
</comment>
<comment type="subunit">
    <text evidence="1">Homodimer. Part of the ribosomal stalk of the 50S ribosomal subunit. Forms a multimeric L10(L12)X complex, where L10 forms an elongated spine to which 2 to 4 L12 dimers bind in a sequential fashion. Binds GTP-bound translation factors.</text>
</comment>
<comment type="similarity">
    <text evidence="1">Belongs to the bacterial ribosomal protein bL12 family.</text>
</comment>
<proteinExistence type="inferred from homology"/>
<accession>Q3SLQ7</accession>
<gene>
    <name evidence="1" type="primary">rplL</name>
    <name type="ordered locus">Tbd_0397</name>
</gene>
<sequence length="127" mass="12722">MAVAKADILDAIAGMTVLELSELIKEMEDKFGVSAAAAAVAVAAPAAGAGAAAAAEEQTEFTVMLNSAGEKKVEVIKVVRAATGLGLKEAKDLVDGAPKAVKEGVSKADADALKKQLEEAGASVEVK</sequence>
<dbReference type="EMBL" id="CP000116">
    <property type="protein sequence ID" value="AAZ96350.1"/>
    <property type="molecule type" value="Genomic_DNA"/>
</dbReference>
<dbReference type="RefSeq" id="WP_011310910.1">
    <property type="nucleotide sequence ID" value="NC_007404.1"/>
</dbReference>
<dbReference type="SMR" id="Q3SLQ7"/>
<dbReference type="STRING" id="292415.Tbd_0397"/>
<dbReference type="KEGG" id="tbd:Tbd_0397"/>
<dbReference type="eggNOG" id="COG0222">
    <property type="taxonomic scope" value="Bacteria"/>
</dbReference>
<dbReference type="HOGENOM" id="CLU_086499_3_2_4"/>
<dbReference type="OrthoDB" id="9811748at2"/>
<dbReference type="Proteomes" id="UP000008291">
    <property type="component" value="Chromosome"/>
</dbReference>
<dbReference type="GO" id="GO:0022625">
    <property type="term" value="C:cytosolic large ribosomal subunit"/>
    <property type="evidence" value="ECO:0007669"/>
    <property type="project" value="TreeGrafter"/>
</dbReference>
<dbReference type="GO" id="GO:0003729">
    <property type="term" value="F:mRNA binding"/>
    <property type="evidence" value="ECO:0007669"/>
    <property type="project" value="TreeGrafter"/>
</dbReference>
<dbReference type="GO" id="GO:0003735">
    <property type="term" value="F:structural constituent of ribosome"/>
    <property type="evidence" value="ECO:0007669"/>
    <property type="project" value="InterPro"/>
</dbReference>
<dbReference type="GO" id="GO:0006412">
    <property type="term" value="P:translation"/>
    <property type="evidence" value="ECO:0007669"/>
    <property type="project" value="UniProtKB-UniRule"/>
</dbReference>
<dbReference type="CDD" id="cd00387">
    <property type="entry name" value="Ribosomal_L7_L12"/>
    <property type="match status" value="1"/>
</dbReference>
<dbReference type="FunFam" id="3.30.1390.10:FF:000001">
    <property type="entry name" value="50S ribosomal protein L7/L12"/>
    <property type="match status" value="1"/>
</dbReference>
<dbReference type="Gene3D" id="3.30.1390.10">
    <property type="match status" value="1"/>
</dbReference>
<dbReference type="Gene3D" id="1.20.5.710">
    <property type="entry name" value="Single helix bin"/>
    <property type="match status" value="1"/>
</dbReference>
<dbReference type="HAMAP" id="MF_00368">
    <property type="entry name" value="Ribosomal_bL12"/>
    <property type="match status" value="1"/>
</dbReference>
<dbReference type="InterPro" id="IPR000206">
    <property type="entry name" value="Ribosomal_bL12"/>
</dbReference>
<dbReference type="InterPro" id="IPR013823">
    <property type="entry name" value="Ribosomal_bL12_C"/>
</dbReference>
<dbReference type="InterPro" id="IPR014719">
    <property type="entry name" value="Ribosomal_bL12_C/ClpS-like"/>
</dbReference>
<dbReference type="InterPro" id="IPR008932">
    <property type="entry name" value="Ribosomal_bL12_oligo"/>
</dbReference>
<dbReference type="InterPro" id="IPR036235">
    <property type="entry name" value="Ribosomal_bL12_oligo_N_sf"/>
</dbReference>
<dbReference type="NCBIfam" id="TIGR00855">
    <property type="entry name" value="L12"/>
    <property type="match status" value="1"/>
</dbReference>
<dbReference type="PANTHER" id="PTHR45987">
    <property type="entry name" value="39S RIBOSOMAL PROTEIN L12"/>
    <property type="match status" value="1"/>
</dbReference>
<dbReference type="PANTHER" id="PTHR45987:SF4">
    <property type="entry name" value="LARGE RIBOSOMAL SUBUNIT PROTEIN BL12M"/>
    <property type="match status" value="1"/>
</dbReference>
<dbReference type="Pfam" id="PF00542">
    <property type="entry name" value="Ribosomal_L12"/>
    <property type="match status" value="1"/>
</dbReference>
<dbReference type="Pfam" id="PF16320">
    <property type="entry name" value="Ribosomal_L12_N"/>
    <property type="match status" value="1"/>
</dbReference>
<dbReference type="SUPFAM" id="SSF54736">
    <property type="entry name" value="ClpS-like"/>
    <property type="match status" value="1"/>
</dbReference>
<dbReference type="SUPFAM" id="SSF48300">
    <property type="entry name" value="Ribosomal protein L7/12, oligomerisation (N-terminal) domain"/>
    <property type="match status" value="1"/>
</dbReference>
<keyword id="KW-1185">Reference proteome</keyword>
<keyword id="KW-0687">Ribonucleoprotein</keyword>
<keyword id="KW-0689">Ribosomal protein</keyword>
<reference key="1">
    <citation type="journal article" date="2006" name="J. Bacteriol.">
        <title>The genome sequence of the obligately chemolithoautotrophic, facultatively anaerobic bacterium Thiobacillus denitrificans.</title>
        <authorList>
            <person name="Beller H.R."/>
            <person name="Chain P.S."/>
            <person name="Letain T.E."/>
            <person name="Chakicherla A."/>
            <person name="Larimer F.W."/>
            <person name="Richardson P.M."/>
            <person name="Coleman M.A."/>
            <person name="Wood A.P."/>
            <person name="Kelly D.P."/>
        </authorList>
    </citation>
    <scope>NUCLEOTIDE SEQUENCE [LARGE SCALE GENOMIC DNA]</scope>
    <source>
        <strain>ATCC 25259 / T1</strain>
    </source>
</reference>
<protein>
    <recommendedName>
        <fullName evidence="1">Large ribosomal subunit protein bL12</fullName>
    </recommendedName>
    <alternativeName>
        <fullName evidence="2">50S ribosomal protein L7/L12</fullName>
    </alternativeName>
</protein>
<name>RL7_THIDA</name>
<feature type="chain" id="PRO_0000243519" description="Large ribosomal subunit protein bL12">
    <location>
        <begin position="1"/>
        <end position="127"/>
    </location>
</feature>
<organism>
    <name type="scientific">Thiobacillus denitrificans (strain ATCC 25259 / T1)</name>
    <dbReference type="NCBI Taxonomy" id="292415"/>
    <lineage>
        <taxon>Bacteria</taxon>
        <taxon>Pseudomonadati</taxon>
        <taxon>Pseudomonadota</taxon>
        <taxon>Betaproteobacteria</taxon>
        <taxon>Nitrosomonadales</taxon>
        <taxon>Thiobacillaceae</taxon>
        <taxon>Thiobacillus</taxon>
    </lineage>
</organism>
<evidence type="ECO:0000255" key="1">
    <source>
        <dbReference type="HAMAP-Rule" id="MF_00368"/>
    </source>
</evidence>
<evidence type="ECO:0000305" key="2"/>